<accession>Q1LTC7</accession>
<evidence type="ECO:0000255" key="1">
    <source>
        <dbReference type="HAMAP-Rule" id="MF_01326"/>
    </source>
</evidence>
<evidence type="ECO:0000305" key="2"/>
<proteinExistence type="inferred from homology"/>
<reference key="1">
    <citation type="journal article" date="2006" name="PLoS Biol.">
        <title>Metabolic complementarity and genomics of the dual bacterial symbiosis of sharpshooters.</title>
        <authorList>
            <person name="Wu D."/>
            <person name="Daugherty S.C."/>
            <person name="Van Aken S.E."/>
            <person name="Pai G.H."/>
            <person name="Watkins K.L."/>
            <person name="Khouri H."/>
            <person name="Tallon L.J."/>
            <person name="Zaborsky J.M."/>
            <person name="Dunbar H.E."/>
            <person name="Tran P.L."/>
            <person name="Moran N.A."/>
            <person name="Eisen J.A."/>
        </authorList>
    </citation>
    <scope>NUCLEOTIDE SEQUENCE [LARGE SCALE GENOMIC DNA]</scope>
</reference>
<organism>
    <name type="scientific">Baumannia cicadellinicola subsp. Homalodisca coagulata</name>
    <dbReference type="NCBI Taxonomy" id="374463"/>
    <lineage>
        <taxon>Bacteria</taxon>
        <taxon>Pseudomonadati</taxon>
        <taxon>Pseudomonadota</taxon>
        <taxon>Gammaproteobacteria</taxon>
        <taxon>Candidatus Palibaumannia</taxon>
    </lineage>
</organism>
<comment type="function">
    <text evidence="1">One of two assembly initiator proteins, it binds directly to the 5'-end of the 23S rRNA, where it nucleates assembly of the 50S subunit.</text>
</comment>
<comment type="function">
    <text evidence="1">One of the proteins that surrounds the polypeptide exit tunnel on the outside of the subunit.</text>
</comment>
<comment type="subunit">
    <text evidence="1">Part of the 50S ribosomal subunit.</text>
</comment>
<comment type="similarity">
    <text evidence="1">Belongs to the universal ribosomal protein uL24 family.</text>
</comment>
<gene>
    <name evidence="1" type="primary">rplX</name>
    <name type="ordered locus">BCI_0339</name>
</gene>
<name>RL24_BAUCH</name>
<feature type="chain" id="PRO_1000141965" description="Large ribosomal subunit protein uL24">
    <location>
        <begin position="1"/>
        <end position="104"/>
    </location>
</feature>
<sequence length="104" mass="11424">MATKIRCTDEVIVLTGKYKGKRGIVIAIYSLGKAIVSGINIVKKHQKPVPALNKTGGIIEKESVIHISNLTIFNTKMNQADRVSFKTINGKKVRVFKSNGQTIN</sequence>
<protein>
    <recommendedName>
        <fullName evidence="1">Large ribosomal subunit protein uL24</fullName>
    </recommendedName>
    <alternativeName>
        <fullName evidence="2">50S ribosomal protein L24</fullName>
    </alternativeName>
</protein>
<dbReference type="EMBL" id="CP000238">
    <property type="protein sequence ID" value="ABF14190.1"/>
    <property type="molecule type" value="Genomic_DNA"/>
</dbReference>
<dbReference type="RefSeq" id="WP_011520520.1">
    <property type="nucleotide sequence ID" value="NC_007984.1"/>
</dbReference>
<dbReference type="SMR" id="Q1LTC7"/>
<dbReference type="STRING" id="374463.BCI_0339"/>
<dbReference type="KEGG" id="bci:BCI_0339"/>
<dbReference type="HOGENOM" id="CLU_093315_2_2_6"/>
<dbReference type="OrthoDB" id="9807419at2"/>
<dbReference type="Proteomes" id="UP000002427">
    <property type="component" value="Chromosome"/>
</dbReference>
<dbReference type="GO" id="GO:1990904">
    <property type="term" value="C:ribonucleoprotein complex"/>
    <property type="evidence" value="ECO:0007669"/>
    <property type="project" value="UniProtKB-KW"/>
</dbReference>
<dbReference type="GO" id="GO:0005840">
    <property type="term" value="C:ribosome"/>
    <property type="evidence" value="ECO:0007669"/>
    <property type="project" value="UniProtKB-KW"/>
</dbReference>
<dbReference type="GO" id="GO:0019843">
    <property type="term" value="F:rRNA binding"/>
    <property type="evidence" value="ECO:0007669"/>
    <property type="project" value="UniProtKB-UniRule"/>
</dbReference>
<dbReference type="GO" id="GO:0003735">
    <property type="term" value="F:structural constituent of ribosome"/>
    <property type="evidence" value="ECO:0007669"/>
    <property type="project" value="InterPro"/>
</dbReference>
<dbReference type="GO" id="GO:0006412">
    <property type="term" value="P:translation"/>
    <property type="evidence" value="ECO:0007669"/>
    <property type="project" value="UniProtKB-UniRule"/>
</dbReference>
<dbReference type="CDD" id="cd06089">
    <property type="entry name" value="KOW_RPL26"/>
    <property type="match status" value="1"/>
</dbReference>
<dbReference type="FunFam" id="2.30.30.30:FF:000004">
    <property type="entry name" value="50S ribosomal protein L24"/>
    <property type="match status" value="1"/>
</dbReference>
<dbReference type="Gene3D" id="2.30.30.30">
    <property type="match status" value="1"/>
</dbReference>
<dbReference type="HAMAP" id="MF_01326_B">
    <property type="entry name" value="Ribosomal_uL24_B"/>
    <property type="match status" value="1"/>
</dbReference>
<dbReference type="InterPro" id="IPR014722">
    <property type="entry name" value="Rib_uL2_dom2"/>
</dbReference>
<dbReference type="InterPro" id="IPR003256">
    <property type="entry name" value="Ribosomal_uL24"/>
</dbReference>
<dbReference type="InterPro" id="IPR041988">
    <property type="entry name" value="Ribosomal_uL24_KOW"/>
</dbReference>
<dbReference type="InterPro" id="IPR008991">
    <property type="entry name" value="Translation_prot_SH3-like_sf"/>
</dbReference>
<dbReference type="NCBIfam" id="TIGR01079">
    <property type="entry name" value="rplX_bact"/>
    <property type="match status" value="1"/>
</dbReference>
<dbReference type="PANTHER" id="PTHR12903">
    <property type="entry name" value="MITOCHONDRIAL RIBOSOMAL PROTEIN L24"/>
    <property type="match status" value="1"/>
</dbReference>
<dbReference type="Pfam" id="PF17136">
    <property type="entry name" value="ribosomal_L24"/>
    <property type="match status" value="1"/>
</dbReference>
<dbReference type="SUPFAM" id="SSF50104">
    <property type="entry name" value="Translation proteins SH3-like domain"/>
    <property type="match status" value="1"/>
</dbReference>
<keyword id="KW-1185">Reference proteome</keyword>
<keyword id="KW-0687">Ribonucleoprotein</keyword>
<keyword id="KW-0689">Ribosomal protein</keyword>
<keyword id="KW-0694">RNA-binding</keyword>
<keyword id="KW-0699">rRNA-binding</keyword>